<reference key="1">
    <citation type="submission" date="2006-08" db="EMBL/GenBank/DDBJ databases">
        <title>Complete sequence of Maricaulis maris MCS10.</title>
        <authorList>
            <consortium name="US DOE Joint Genome Institute"/>
            <person name="Copeland A."/>
            <person name="Lucas S."/>
            <person name="Lapidus A."/>
            <person name="Barry K."/>
            <person name="Detter J.C."/>
            <person name="Glavina del Rio T."/>
            <person name="Hammon N."/>
            <person name="Israni S."/>
            <person name="Dalin E."/>
            <person name="Tice H."/>
            <person name="Pitluck S."/>
            <person name="Saunders E."/>
            <person name="Brettin T."/>
            <person name="Bruce D."/>
            <person name="Han C."/>
            <person name="Tapia R."/>
            <person name="Gilna P."/>
            <person name="Schmutz J."/>
            <person name="Larimer F."/>
            <person name="Land M."/>
            <person name="Hauser L."/>
            <person name="Kyrpides N."/>
            <person name="Mikhailova N."/>
            <person name="Viollier P."/>
            <person name="Stephens C."/>
            <person name="Richardson P."/>
        </authorList>
    </citation>
    <scope>NUCLEOTIDE SEQUENCE [LARGE SCALE GENOMIC DNA]</scope>
    <source>
        <strain>MCS10</strain>
    </source>
</reference>
<comment type="function">
    <text evidence="1">Associates with the EF-Tu.GDP complex and induces the exchange of GDP to GTP. It remains bound to the aminoacyl-tRNA.EF-Tu.GTP complex up to the GTP hydrolysis stage on the ribosome.</text>
</comment>
<comment type="subcellular location">
    <subcellularLocation>
        <location evidence="1">Cytoplasm</location>
    </subcellularLocation>
</comment>
<comment type="similarity">
    <text evidence="1">Belongs to the EF-Ts family.</text>
</comment>
<proteinExistence type="inferred from homology"/>
<dbReference type="EMBL" id="CP000449">
    <property type="protein sequence ID" value="ABI65673.1"/>
    <property type="molecule type" value="Genomic_DNA"/>
</dbReference>
<dbReference type="RefSeq" id="WP_011643320.1">
    <property type="nucleotide sequence ID" value="NC_008347.1"/>
</dbReference>
<dbReference type="SMR" id="Q0APW4"/>
<dbReference type="STRING" id="394221.Mmar10_1381"/>
<dbReference type="KEGG" id="mmr:Mmar10_1381"/>
<dbReference type="eggNOG" id="COG0264">
    <property type="taxonomic scope" value="Bacteria"/>
</dbReference>
<dbReference type="HOGENOM" id="CLU_047155_2_0_5"/>
<dbReference type="OrthoDB" id="9808348at2"/>
<dbReference type="Proteomes" id="UP000001964">
    <property type="component" value="Chromosome"/>
</dbReference>
<dbReference type="GO" id="GO:0005737">
    <property type="term" value="C:cytoplasm"/>
    <property type="evidence" value="ECO:0007669"/>
    <property type="project" value="UniProtKB-SubCell"/>
</dbReference>
<dbReference type="GO" id="GO:0003746">
    <property type="term" value="F:translation elongation factor activity"/>
    <property type="evidence" value="ECO:0007669"/>
    <property type="project" value="UniProtKB-UniRule"/>
</dbReference>
<dbReference type="CDD" id="cd14275">
    <property type="entry name" value="UBA_EF-Ts"/>
    <property type="match status" value="1"/>
</dbReference>
<dbReference type="FunFam" id="1.10.286.20:FF:000001">
    <property type="entry name" value="Elongation factor Ts"/>
    <property type="match status" value="1"/>
</dbReference>
<dbReference type="FunFam" id="1.10.8.10:FF:000001">
    <property type="entry name" value="Elongation factor Ts"/>
    <property type="match status" value="1"/>
</dbReference>
<dbReference type="Gene3D" id="1.10.286.20">
    <property type="match status" value="1"/>
</dbReference>
<dbReference type="Gene3D" id="1.10.8.10">
    <property type="entry name" value="DNA helicase RuvA subunit, C-terminal domain"/>
    <property type="match status" value="1"/>
</dbReference>
<dbReference type="Gene3D" id="3.30.479.20">
    <property type="entry name" value="Elongation factor Ts, dimerisation domain"/>
    <property type="match status" value="2"/>
</dbReference>
<dbReference type="HAMAP" id="MF_00050">
    <property type="entry name" value="EF_Ts"/>
    <property type="match status" value="1"/>
</dbReference>
<dbReference type="InterPro" id="IPR036402">
    <property type="entry name" value="EF-Ts_dimer_sf"/>
</dbReference>
<dbReference type="InterPro" id="IPR001816">
    <property type="entry name" value="Transl_elong_EFTs/EF1B"/>
</dbReference>
<dbReference type="InterPro" id="IPR014039">
    <property type="entry name" value="Transl_elong_EFTs/EF1B_dimer"/>
</dbReference>
<dbReference type="InterPro" id="IPR018101">
    <property type="entry name" value="Transl_elong_Ts_CS"/>
</dbReference>
<dbReference type="InterPro" id="IPR009060">
    <property type="entry name" value="UBA-like_sf"/>
</dbReference>
<dbReference type="NCBIfam" id="TIGR00116">
    <property type="entry name" value="tsf"/>
    <property type="match status" value="1"/>
</dbReference>
<dbReference type="PANTHER" id="PTHR11741">
    <property type="entry name" value="ELONGATION FACTOR TS"/>
    <property type="match status" value="1"/>
</dbReference>
<dbReference type="PANTHER" id="PTHR11741:SF0">
    <property type="entry name" value="ELONGATION FACTOR TS, MITOCHONDRIAL"/>
    <property type="match status" value="1"/>
</dbReference>
<dbReference type="Pfam" id="PF00889">
    <property type="entry name" value="EF_TS"/>
    <property type="match status" value="1"/>
</dbReference>
<dbReference type="SUPFAM" id="SSF54713">
    <property type="entry name" value="Elongation factor Ts (EF-Ts), dimerisation domain"/>
    <property type="match status" value="2"/>
</dbReference>
<dbReference type="SUPFAM" id="SSF46934">
    <property type="entry name" value="UBA-like"/>
    <property type="match status" value="1"/>
</dbReference>
<dbReference type="PROSITE" id="PS01126">
    <property type="entry name" value="EF_TS_1"/>
    <property type="match status" value="1"/>
</dbReference>
<dbReference type="PROSITE" id="PS01127">
    <property type="entry name" value="EF_TS_2"/>
    <property type="match status" value="1"/>
</dbReference>
<gene>
    <name evidence="1" type="primary">tsf</name>
    <name type="ordered locus">Mmar10_1381</name>
</gene>
<keyword id="KW-0963">Cytoplasm</keyword>
<keyword id="KW-0251">Elongation factor</keyword>
<keyword id="KW-0648">Protein biosynthesis</keyword>
<keyword id="KW-1185">Reference proteome</keyword>
<name>EFTS_MARMM</name>
<evidence type="ECO:0000255" key="1">
    <source>
        <dbReference type="HAMAP-Rule" id="MF_00050"/>
    </source>
</evidence>
<accession>Q0APW4</accession>
<feature type="chain" id="PRO_1000006123" description="Elongation factor Ts">
    <location>
        <begin position="1"/>
        <end position="312"/>
    </location>
</feature>
<feature type="region of interest" description="Involved in Mg(2+) ion dislocation from EF-Tu" evidence="1">
    <location>
        <begin position="80"/>
        <end position="83"/>
    </location>
</feature>
<organism>
    <name type="scientific">Maricaulis maris (strain MCS10)</name>
    <name type="common">Caulobacter maris</name>
    <dbReference type="NCBI Taxonomy" id="394221"/>
    <lineage>
        <taxon>Bacteria</taxon>
        <taxon>Pseudomonadati</taxon>
        <taxon>Pseudomonadota</taxon>
        <taxon>Alphaproteobacteria</taxon>
        <taxon>Maricaulales</taxon>
        <taxon>Maricaulaceae</taxon>
        <taxon>Maricaulis</taxon>
    </lineage>
</organism>
<protein>
    <recommendedName>
        <fullName evidence="1">Elongation factor Ts</fullName>
        <shortName evidence="1">EF-Ts</shortName>
    </recommendedName>
</protein>
<sequence>MAGITAALVKELRDKTGVGMMDCKKALGETDGDFEAAVDWLRKKGLSKAAKKADRVAAEGLVAVATQGGQGAVVEVNSETDFVARNEKFQTAVKEIAALAIGGSGDVAEIKAASTSGGSTVEDHLTNLIATIGENMALRRAAVVVAEPGVVASYVHNPAATDMGAIGVLVGLQSDGDKDKLAELGRKIAMHVAAGSPAVAVSVDVDGVDSAIADKEREVFADQARQAGKPDSIVEKMVEGRMRKFYEEVVLLKQAFVMDPDNTIEQVLEAAAKDLGAPVTISGFVRMALGEGVEKGPEEDFAAEVAAASGQS</sequence>